<name>Y1767_STRP4</name>
<evidence type="ECO:0000255" key="1">
    <source>
        <dbReference type="HAMAP-Rule" id="MF_00363"/>
    </source>
</evidence>
<proteinExistence type="inferred from homology"/>
<organism>
    <name type="scientific">Streptococcus pneumoniae serotype 19F (strain G54)</name>
    <dbReference type="NCBI Taxonomy" id="512566"/>
    <lineage>
        <taxon>Bacteria</taxon>
        <taxon>Bacillati</taxon>
        <taxon>Bacillota</taxon>
        <taxon>Bacilli</taxon>
        <taxon>Lactobacillales</taxon>
        <taxon>Streptococcaceae</taxon>
        <taxon>Streptococcus</taxon>
    </lineage>
</organism>
<comment type="subcellular location">
    <subcellularLocation>
        <location evidence="1">Cell membrane</location>
        <topology evidence="1">Single-pass membrane protein</topology>
    </subcellularLocation>
</comment>
<comment type="similarity">
    <text evidence="1">Belongs to the UPF0154 family.</text>
</comment>
<feature type="chain" id="PRO_1000121048" description="UPF0154 protein SPG_1767">
    <location>
        <begin position="1"/>
        <end position="82"/>
    </location>
</feature>
<feature type="transmembrane region" description="Helical" evidence="1">
    <location>
        <begin position="5"/>
        <end position="25"/>
    </location>
</feature>
<dbReference type="EMBL" id="CP001015">
    <property type="protein sequence ID" value="ACF56458.1"/>
    <property type="molecule type" value="Genomic_DNA"/>
</dbReference>
<dbReference type="SMR" id="B5E1Z4"/>
<dbReference type="KEGG" id="spx:SPG_1767"/>
<dbReference type="HOGENOM" id="CLU_180108_0_0_9"/>
<dbReference type="GO" id="GO:0005886">
    <property type="term" value="C:plasma membrane"/>
    <property type="evidence" value="ECO:0007669"/>
    <property type="project" value="UniProtKB-SubCell"/>
</dbReference>
<dbReference type="HAMAP" id="MF_00363">
    <property type="entry name" value="UPF0154"/>
    <property type="match status" value="1"/>
</dbReference>
<dbReference type="InterPro" id="IPR005359">
    <property type="entry name" value="UPF0154"/>
</dbReference>
<dbReference type="Pfam" id="PF03672">
    <property type="entry name" value="UPF0154"/>
    <property type="match status" value="1"/>
</dbReference>
<keyword id="KW-1003">Cell membrane</keyword>
<keyword id="KW-0472">Membrane</keyword>
<keyword id="KW-0812">Transmembrane</keyword>
<keyword id="KW-1133">Transmembrane helix</keyword>
<accession>B5E1Z4</accession>
<reference key="1">
    <citation type="journal article" date="2001" name="Microb. Drug Resist.">
        <title>Annotated draft genomic sequence from a Streptococcus pneumoniae type 19F clinical isolate.</title>
        <authorList>
            <person name="Dopazo J."/>
            <person name="Mendoza A."/>
            <person name="Herrero J."/>
            <person name="Caldara F."/>
            <person name="Humbert Y."/>
            <person name="Friedli L."/>
            <person name="Guerrier M."/>
            <person name="Grand-Schenk E."/>
            <person name="Gandin C."/>
            <person name="de Francesco M."/>
            <person name="Polissi A."/>
            <person name="Buell G."/>
            <person name="Feger G."/>
            <person name="Garcia E."/>
            <person name="Peitsch M."/>
            <person name="Garcia-Bustos J.F."/>
        </authorList>
    </citation>
    <scope>NUCLEOTIDE SEQUENCE [LARGE SCALE GENOMIC DNA]</scope>
    <source>
        <strain>G54</strain>
    </source>
</reference>
<reference key="2">
    <citation type="submission" date="2008-03" db="EMBL/GenBank/DDBJ databases">
        <title>Pneumococcal beta glucoside metabolism investigated by whole genome comparison.</title>
        <authorList>
            <person name="Mulas L."/>
            <person name="Trappetti C."/>
            <person name="Hakenbeck R."/>
            <person name="Iannelli F."/>
            <person name="Pozzi G."/>
            <person name="Davidsen T.M."/>
            <person name="Tettelin H."/>
            <person name="Oggioni M."/>
        </authorList>
    </citation>
    <scope>NUCLEOTIDE SEQUENCE [LARGE SCALE GENOMIC DNA]</scope>
    <source>
        <strain>G54</strain>
    </source>
</reference>
<gene>
    <name type="ordered locus">SPG_1767</name>
</gene>
<sequence>MDLLLAIVLIVLAFLGGALGGMYLVRKQIEKEFADNPRLNAEAVRTLLSANGQKPSEAKVQQVYHQIIRQQKAALANNKKKK</sequence>
<protein>
    <recommendedName>
        <fullName evidence="1">UPF0154 protein SPG_1767</fullName>
    </recommendedName>
</protein>